<reference key="1">
    <citation type="journal article" date="1985" name="Cell">
        <title>HTLV-III env gene products synthesized in E. coli are recognized by antibodies present in the sera of AIDS patients.</title>
        <authorList>
            <person name="Crowl R."/>
            <person name="Ganguly K."/>
            <person name="Gordon M."/>
            <person name="Conroy R."/>
            <person name="Schaber M."/>
            <person name="Kramer R."/>
            <person name="Shaw G.M."/>
            <person name="Wong-Staal F."/>
            <person name="Reddy E.P."/>
        </authorList>
    </citation>
    <scope>NUCLEOTIDE SEQUENCE [GENOMIC RNA]</scope>
</reference>
<sequence length="78" mass="9305">MEQAPEDQGPQREPHNEWTLELLEELKNEAVRHFPRIWLHGLGQHIYETYGDTWAGVEAIIRILQQLLFIHFQNWVST</sequence>
<keyword id="KW-0010">Activator</keyword>
<keyword id="KW-0014">AIDS</keyword>
<keyword id="KW-0053">Apoptosis</keyword>
<keyword id="KW-0131">Cell cycle</keyword>
<keyword id="KW-1079">Host G2/M cell cycle arrest by virus</keyword>
<keyword id="KW-1048">Host nucleus</keyword>
<keyword id="KW-0945">Host-virus interaction</keyword>
<keyword id="KW-0407">Ion channel</keyword>
<keyword id="KW-0406">Ion transport</keyword>
<keyword id="KW-1121">Modulation of host cell cycle by virus</keyword>
<keyword id="KW-0597">Phosphoprotein</keyword>
<keyword id="KW-0804">Transcription</keyword>
<keyword id="KW-0805">Transcription regulation</keyword>
<keyword id="KW-0813">Transport</keyword>
<keyword id="KW-1163">Viral penetration into host nucleus</keyword>
<keyword id="KW-0946">Virion</keyword>
<keyword id="KW-1160">Virus entry into host cell</keyword>
<proteinExistence type="inferred from homology"/>
<protein>
    <recommendedName>
        <fullName evidence="1">Protein Vpr</fullName>
    </recommendedName>
    <alternativeName>
        <fullName evidence="1">R ORF protein</fullName>
    </alternativeName>
    <alternativeName>
        <fullName evidence="1">Viral protein R</fullName>
    </alternativeName>
</protein>
<organismHost>
    <name type="scientific">Homo sapiens</name>
    <name type="common">Human</name>
    <dbReference type="NCBI Taxonomy" id="9606"/>
</organismHost>
<organism>
    <name type="scientific">Human immunodeficiency virus type 1 group M subtype B (isolate HXB3)</name>
    <name type="common">HIV-1</name>
    <dbReference type="NCBI Taxonomy" id="11707"/>
    <lineage>
        <taxon>Viruses</taxon>
        <taxon>Riboviria</taxon>
        <taxon>Pararnavirae</taxon>
        <taxon>Artverviricota</taxon>
        <taxon>Revtraviricetes</taxon>
        <taxon>Ortervirales</taxon>
        <taxon>Retroviridae</taxon>
        <taxon>Orthoretrovirinae</taxon>
        <taxon>Lentivirus</taxon>
        <taxon>Human immunodeficiency virus type 1</taxon>
    </lineage>
</organism>
<comment type="function">
    <text evidence="1">During virus replication, may deplete host UNG protein, and incude G2-M cell cycle arrest. Acts by targeting specific host proteins for degradation by the 26S proteasome, through association with the cellular CUL4A-DDB1 E3 ligase complex by direct interaction with host VPRPB/DCAF-1. Cell cycle arrest reportedly occurs within hours of infection and is not blocked by antiviral agents, suggesting that it is initiated by the VPR carried into the virion. Additionally, VPR induces apoptosis in a cell cycle dependent manner suggesting that these two effects are mechanistically linked. Detected in the serum and cerebrospinal fluid of AIDS patient, VPR may also induce cell death to bystander cells.</text>
</comment>
<comment type="function">
    <text evidence="1">During virus entry, plays a role in the transport of the viral pre-integration (PIC) complex to the host nucleus. This function is crucial for viral infection of non-dividing macrophages. May act directly at the nuclear pore complex, by binding nucleoporins phenylalanine-glycine (FG)-repeat regions.</text>
</comment>
<comment type="subunit">
    <text evidence="1">Homooligomer, may form homodimer. Interacts with p6-gag region of the Pr55 Gag precursor protein through a (Leu-X-X)4 motif near the C-terminus of the P6gag protein. Interacts with host UNG. May interact with host RAD23A/HHR23A. Interacts with host VPRBP/DCAF1, leading to hijack the CUL4A-RBX1-DDB1-DCAF1/VPRBP complex, mediating ubiquitination of host proteins such as TERT and ZGPAT and arrest of the cell cycle in G2 phase.</text>
</comment>
<comment type="subcellular location">
    <subcellularLocation>
        <location evidence="1">Virion</location>
    </subcellularLocation>
    <subcellularLocation>
        <location evidence="1">Host nucleus</location>
    </subcellularLocation>
    <subcellularLocation>
        <location evidence="1">Host extracellular space</location>
    </subcellularLocation>
    <text evidence="1">Incorporation into virion is dependent on p6 GAG sequences. Lacks a canonical nuclear localization signal, thus import into nucleus may function independently of the human importin pathway. Detected in high quantity in the serum and cerebrospinal fluid of AIDS patient.</text>
</comment>
<comment type="PTM">
    <text evidence="1">Phosphorylated on several residues by host. These phosphorylations regulate VPR activity for the nuclear import of the HIV-1 pre-integration complex.</text>
</comment>
<comment type="miscellaneous">
    <text evidence="1">HIV-1 lineages are divided in three main groups, M (for Major), O (for Outlier), and N (for New, or Non-M, Non-O). The vast majority of strains found worldwide belong to the group M. Group O seems to be endemic to and largely confined to Cameroon and neighboring countries in West Central Africa, where these viruses represent a small minority of HIV-1 strains. The group N is represented by a limited number of isolates from Cameroonian persons. The group M is further subdivided in 9 clades or subtypes (A to D, F to H, J and K).</text>
</comment>
<comment type="similarity">
    <text evidence="1">Belongs to the HIV-1 VPR protein family.</text>
</comment>
<accession>P69727</accession>
<accession>P05926</accession>
<accession>Q85577</accession>
<evidence type="ECO:0000255" key="1">
    <source>
        <dbReference type="HAMAP-Rule" id="MF_04080"/>
    </source>
</evidence>
<feature type="chain" id="PRO_0000085452" description="Protein Vpr">
    <location>
        <begin position="1"/>
        <end position="78"/>
    </location>
</feature>
<feature type="region of interest" description="Homooligomerization" evidence="1">
    <location>
        <begin position="1"/>
        <end position="42"/>
    </location>
</feature>
<gene>
    <name evidence="1" type="primary">vpr</name>
</gene>
<dbReference type="EMBL" id="M14100">
    <property type="protein sequence ID" value="AAA44675.1"/>
    <property type="molecule type" value="Genomic_RNA"/>
</dbReference>
<dbReference type="SMR" id="P69727"/>
<dbReference type="GO" id="GO:0043657">
    <property type="term" value="C:host cell"/>
    <property type="evidence" value="ECO:0007669"/>
    <property type="project" value="GOC"/>
</dbReference>
<dbReference type="GO" id="GO:0042025">
    <property type="term" value="C:host cell nucleus"/>
    <property type="evidence" value="ECO:0007669"/>
    <property type="project" value="UniProtKB-SubCell"/>
</dbReference>
<dbReference type="GO" id="GO:0043655">
    <property type="term" value="C:host extracellular space"/>
    <property type="evidence" value="ECO:0007669"/>
    <property type="project" value="UniProtKB-SubCell"/>
</dbReference>
<dbReference type="GO" id="GO:0044423">
    <property type="term" value="C:virion component"/>
    <property type="evidence" value="ECO:0007669"/>
    <property type="project" value="UniProtKB-UniRule"/>
</dbReference>
<dbReference type="GO" id="GO:0006351">
    <property type="term" value="P:DNA-templated transcription"/>
    <property type="evidence" value="ECO:0007669"/>
    <property type="project" value="UniProtKB-UniRule"/>
</dbReference>
<dbReference type="GO" id="GO:0034220">
    <property type="term" value="P:monoatomic ion transmembrane transport"/>
    <property type="evidence" value="ECO:0007669"/>
    <property type="project" value="UniProtKB-KW"/>
</dbReference>
<dbReference type="GO" id="GO:0051260">
    <property type="term" value="P:protein homooligomerization"/>
    <property type="evidence" value="ECO:0007669"/>
    <property type="project" value="UniProtKB-UniRule"/>
</dbReference>
<dbReference type="GO" id="GO:0006355">
    <property type="term" value="P:regulation of DNA-templated transcription"/>
    <property type="evidence" value="ECO:0007669"/>
    <property type="project" value="UniProtKB-UniRule"/>
</dbReference>
<dbReference type="GO" id="GO:0046718">
    <property type="term" value="P:symbiont entry into host cell"/>
    <property type="evidence" value="ECO:0007669"/>
    <property type="project" value="UniProtKB-KW"/>
</dbReference>
<dbReference type="GO" id="GO:0052151">
    <property type="term" value="P:symbiont-mediated activation of host apoptosis"/>
    <property type="evidence" value="ECO:0007669"/>
    <property type="project" value="UniProtKB-UniRule"/>
</dbReference>
<dbReference type="GO" id="GO:0039592">
    <property type="term" value="P:symbiont-mediated arrest of host cell cycle during G2/M transition"/>
    <property type="evidence" value="ECO:0007669"/>
    <property type="project" value="UniProtKB-UniRule"/>
</dbReference>
<dbReference type="GO" id="GO:0075732">
    <property type="term" value="P:viral penetration into host nucleus"/>
    <property type="evidence" value="ECO:0007669"/>
    <property type="project" value="UniProtKB-UniRule"/>
</dbReference>
<dbReference type="Gene3D" id="6.10.210.10">
    <property type="match status" value="1"/>
</dbReference>
<dbReference type="Gene3D" id="1.20.5.90">
    <property type="entry name" value="VpR/VpX protein, C-terminal domain"/>
    <property type="match status" value="1"/>
</dbReference>
<dbReference type="HAMAP" id="MF_04080">
    <property type="entry name" value="HIV_VPR"/>
    <property type="match status" value="1"/>
</dbReference>
<dbReference type="InterPro" id="IPR000012">
    <property type="entry name" value="RetroV_VpR/X"/>
</dbReference>
<dbReference type="Pfam" id="PF00522">
    <property type="entry name" value="VPR"/>
    <property type="match status" value="1"/>
</dbReference>
<dbReference type="PRINTS" id="PR00444">
    <property type="entry name" value="HIVVPRVPX"/>
</dbReference>
<name>VPR_HV1H3</name>